<protein>
    <recommendedName>
        <fullName evidence="1">Purine ribonucleoside efflux pump NepI</fullName>
    </recommendedName>
</protein>
<dbReference type="EMBL" id="AE005674">
    <property type="protein sequence ID" value="AAN45239.1"/>
    <property type="status" value="ALT_INIT"/>
    <property type="molecule type" value="Genomic_DNA"/>
</dbReference>
<dbReference type="EMBL" id="AE014073">
    <property type="protein sequence ID" value="AAP18957.1"/>
    <property type="status" value="ALT_INIT"/>
    <property type="molecule type" value="Genomic_DNA"/>
</dbReference>
<dbReference type="RefSeq" id="WP_001288549.1">
    <property type="nucleotide sequence ID" value="NZ_WPGW01000019.1"/>
</dbReference>
<dbReference type="SMR" id="P0ADL2"/>
<dbReference type="STRING" id="198214.SF3799"/>
<dbReference type="PaxDb" id="198214-SF3799"/>
<dbReference type="GeneID" id="75205376"/>
<dbReference type="KEGG" id="sfl:SF3799"/>
<dbReference type="KEGG" id="sfx:S3969"/>
<dbReference type="PATRIC" id="fig|198214.7.peg.4484"/>
<dbReference type="HOGENOM" id="CLU_001265_61_1_6"/>
<dbReference type="Proteomes" id="UP000001006">
    <property type="component" value="Chromosome"/>
</dbReference>
<dbReference type="Proteomes" id="UP000002673">
    <property type="component" value="Chromosome"/>
</dbReference>
<dbReference type="GO" id="GO:0005886">
    <property type="term" value="C:plasma membrane"/>
    <property type="evidence" value="ECO:0007669"/>
    <property type="project" value="UniProtKB-SubCell"/>
</dbReference>
<dbReference type="GO" id="GO:0015297">
    <property type="term" value="F:antiporter activity"/>
    <property type="evidence" value="ECO:0007669"/>
    <property type="project" value="UniProtKB-KW"/>
</dbReference>
<dbReference type="GO" id="GO:0015211">
    <property type="term" value="F:purine nucleoside transmembrane transporter activity"/>
    <property type="evidence" value="ECO:0007669"/>
    <property type="project" value="UniProtKB-UniRule"/>
</dbReference>
<dbReference type="CDD" id="cd17324">
    <property type="entry name" value="MFS_NepI_like"/>
    <property type="match status" value="1"/>
</dbReference>
<dbReference type="FunFam" id="1.20.1250.20:FF:000113">
    <property type="entry name" value="Purine ribonucleoside efflux pump NepI"/>
    <property type="match status" value="1"/>
</dbReference>
<dbReference type="Gene3D" id="1.20.1250.20">
    <property type="entry name" value="MFS general substrate transporter like domains"/>
    <property type="match status" value="1"/>
</dbReference>
<dbReference type="HAMAP" id="MF_01189">
    <property type="entry name" value="MFS_NepI"/>
    <property type="match status" value="1"/>
</dbReference>
<dbReference type="InterPro" id="IPR011701">
    <property type="entry name" value="MFS"/>
</dbReference>
<dbReference type="InterPro" id="IPR020846">
    <property type="entry name" value="MFS_dom"/>
</dbReference>
<dbReference type="InterPro" id="IPR050189">
    <property type="entry name" value="MFS_Efflux_Transporters"/>
</dbReference>
<dbReference type="InterPro" id="IPR023680">
    <property type="entry name" value="MFS_NepI"/>
</dbReference>
<dbReference type="InterPro" id="IPR036259">
    <property type="entry name" value="MFS_trans_sf"/>
</dbReference>
<dbReference type="NCBIfam" id="NF007578">
    <property type="entry name" value="PRK10213.1"/>
    <property type="match status" value="1"/>
</dbReference>
<dbReference type="PANTHER" id="PTHR43124">
    <property type="entry name" value="PURINE EFFLUX PUMP PBUE"/>
    <property type="match status" value="1"/>
</dbReference>
<dbReference type="PANTHER" id="PTHR43124:SF5">
    <property type="entry name" value="PURINE RIBONUCLEOSIDE EFFLUX PUMP NEPI"/>
    <property type="match status" value="1"/>
</dbReference>
<dbReference type="Pfam" id="PF07690">
    <property type="entry name" value="MFS_1"/>
    <property type="match status" value="1"/>
</dbReference>
<dbReference type="SUPFAM" id="SSF103473">
    <property type="entry name" value="MFS general substrate transporter"/>
    <property type="match status" value="1"/>
</dbReference>
<dbReference type="PROSITE" id="PS50850">
    <property type="entry name" value="MFS"/>
    <property type="match status" value="1"/>
</dbReference>
<feature type="chain" id="PRO_0000169617" description="Purine ribonucleoside efflux pump NepI">
    <location>
        <begin position="1"/>
        <end position="396"/>
    </location>
</feature>
<feature type="topological domain" description="Cytoplasmic" evidence="1">
    <location>
        <begin position="1"/>
        <end position="21"/>
    </location>
</feature>
<feature type="transmembrane region" description="Helical" evidence="1">
    <location>
        <begin position="22"/>
        <end position="42"/>
    </location>
</feature>
<feature type="topological domain" description="Periplasmic" evidence="1">
    <location>
        <begin position="43"/>
        <end position="54"/>
    </location>
</feature>
<feature type="transmembrane region" description="Helical" evidence="1">
    <location>
        <begin position="55"/>
        <end position="75"/>
    </location>
</feature>
<feature type="topological domain" description="Cytoplasmic" evidence="1">
    <location>
        <begin position="76"/>
        <end position="85"/>
    </location>
</feature>
<feature type="transmembrane region" description="Helical" evidence="1">
    <location>
        <begin position="86"/>
        <end position="106"/>
    </location>
</feature>
<feature type="topological domain" description="Periplasmic" evidence="1">
    <location>
        <position position="107"/>
    </location>
</feature>
<feature type="transmembrane region" description="Helical" evidence="1">
    <location>
        <begin position="108"/>
        <end position="128"/>
    </location>
</feature>
<feature type="topological domain" description="Cytoplasmic" evidence="1">
    <location>
        <begin position="129"/>
        <end position="147"/>
    </location>
</feature>
<feature type="transmembrane region" description="Helical" evidence="1">
    <location>
        <begin position="148"/>
        <end position="168"/>
    </location>
</feature>
<feature type="topological domain" description="Periplasmic" evidence="1">
    <location>
        <begin position="169"/>
        <end position="175"/>
    </location>
</feature>
<feature type="transmembrane region" description="Helical" evidence="1">
    <location>
        <begin position="176"/>
        <end position="196"/>
    </location>
</feature>
<feature type="topological domain" description="Cytoplasmic" evidence="1">
    <location>
        <begin position="197"/>
        <end position="215"/>
    </location>
</feature>
<feature type="transmembrane region" description="Helical" evidence="1">
    <location>
        <begin position="216"/>
        <end position="236"/>
    </location>
</feature>
<feature type="topological domain" description="Periplasmic" evidence="1">
    <location>
        <begin position="237"/>
        <end position="255"/>
    </location>
</feature>
<feature type="transmembrane region" description="Helical" evidence="1">
    <location>
        <begin position="256"/>
        <end position="276"/>
    </location>
</feature>
<feature type="topological domain" description="Cytoplasmic" evidence="1">
    <location>
        <begin position="277"/>
        <end position="281"/>
    </location>
</feature>
<feature type="transmembrane region" description="Helical" evidence="1">
    <location>
        <begin position="282"/>
        <end position="302"/>
    </location>
</feature>
<feature type="topological domain" description="Periplasmic" evidence="1">
    <location>
        <begin position="303"/>
        <end position="305"/>
    </location>
</feature>
<feature type="transmembrane region" description="Helical" evidence="1">
    <location>
        <begin position="306"/>
        <end position="326"/>
    </location>
</feature>
<feature type="topological domain" description="Cytoplasmic" evidence="1">
    <location>
        <begin position="327"/>
        <end position="343"/>
    </location>
</feature>
<feature type="transmembrane region" description="Helical" evidence="1">
    <location>
        <begin position="344"/>
        <end position="364"/>
    </location>
</feature>
<feature type="topological domain" description="Periplasmic" evidence="1">
    <location>
        <begin position="365"/>
        <end position="366"/>
    </location>
</feature>
<feature type="transmembrane region" description="Helical" evidence="1">
    <location>
        <begin position="367"/>
        <end position="387"/>
    </location>
</feature>
<feature type="topological domain" description="Cytoplasmic" evidence="1">
    <location>
        <begin position="388"/>
        <end position="396"/>
    </location>
</feature>
<gene>
    <name evidence="1" type="primary">nepI</name>
    <name type="ordered locus">SF3799</name>
    <name type="ordered locus">S3969</name>
</gene>
<organism>
    <name type="scientific">Shigella flexneri</name>
    <dbReference type="NCBI Taxonomy" id="623"/>
    <lineage>
        <taxon>Bacteria</taxon>
        <taxon>Pseudomonadati</taxon>
        <taxon>Pseudomonadota</taxon>
        <taxon>Gammaproteobacteria</taxon>
        <taxon>Enterobacterales</taxon>
        <taxon>Enterobacteriaceae</taxon>
        <taxon>Shigella</taxon>
    </lineage>
</organism>
<reference key="1">
    <citation type="journal article" date="2002" name="Nucleic Acids Res.">
        <title>Genome sequence of Shigella flexneri 2a: insights into pathogenicity through comparison with genomes of Escherichia coli K12 and O157.</title>
        <authorList>
            <person name="Jin Q."/>
            <person name="Yuan Z."/>
            <person name="Xu J."/>
            <person name="Wang Y."/>
            <person name="Shen Y."/>
            <person name="Lu W."/>
            <person name="Wang J."/>
            <person name="Liu H."/>
            <person name="Yang J."/>
            <person name="Yang F."/>
            <person name="Zhang X."/>
            <person name="Zhang J."/>
            <person name="Yang G."/>
            <person name="Wu H."/>
            <person name="Qu D."/>
            <person name="Dong J."/>
            <person name="Sun L."/>
            <person name="Xue Y."/>
            <person name="Zhao A."/>
            <person name="Gao Y."/>
            <person name="Zhu J."/>
            <person name="Kan B."/>
            <person name="Ding K."/>
            <person name="Chen S."/>
            <person name="Cheng H."/>
            <person name="Yao Z."/>
            <person name="He B."/>
            <person name="Chen R."/>
            <person name="Ma D."/>
            <person name="Qiang B."/>
            <person name="Wen Y."/>
            <person name="Hou Y."/>
            <person name="Yu J."/>
        </authorList>
    </citation>
    <scope>NUCLEOTIDE SEQUENCE [LARGE SCALE GENOMIC DNA]</scope>
    <source>
        <strain>301 / Serotype 2a</strain>
    </source>
</reference>
<reference key="2">
    <citation type="journal article" date="2003" name="Infect. Immun.">
        <title>Complete genome sequence and comparative genomics of Shigella flexneri serotype 2a strain 2457T.</title>
        <authorList>
            <person name="Wei J."/>
            <person name="Goldberg M.B."/>
            <person name="Burland V."/>
            <person name="Venkatesan M.M."/>
            <person name="Deng W."/>
            <person name="Fournier G."/>
            <person name="Mayhew G.F."/>
            <person name="Plunkett G. III"/>
            <person name="Rose D.J."/>
            <person name="Darling A."/>
            <person name="Mau B."/>
            <person name="Perna N.T."/>
            <person name="Payne S.M."/>
            <person name="Runyen-Janecky L.J."/>
            <person name="Zhou S."/>
            <person name="Schwartz D.C."/>
            <person name="Blattner F.R."/>
        </authorList>
    </citation>
    <scope>NUCLEOTIDE SEQUENCE [LARGE SCALE GENOMIC DNA]</scope>
    <source>
        <strain>ATCC 700930 / 2457T / Serotype 2a</strain>
    </source>
</reference>
<keyword id="KW-0050">Antiport</keyword>
<keyword id="KW-0997">Cell inner membrane</keyword>
<keyword id="KW-1003">Cell membrane</keyword>
<keyword id="KW-0472">Membrane</keyword>
<keyword id="KW-1185">Reference proteome</keyword>
<keyword id="KW-0812">Transmembrane</keyword>
<keyword id="KW-1133">Transmembrane helix</keyword>
<keyword id="KW-0813">Transport</keyword>
<name>NEPI_SHIFL</name>
<proteinExistence type="inferred from homology"/>
<evidence type="ECO:0000255" key="1">
    <source>
        <dbReference type="HAMAP-Rule" id="MF_01189"/>
    </source>
</evidence>
<evidence type="ECO:0000305" key="2"/>
<comment type="function">
    <text evidence="1">Involved in the efflux of purine ribonucleosides, such as inosine and guanosine.</text>
</comment>
<comment type="catalytic activity">
    <reaction evidence="1">
        <text>inosine(in) + H(+)(out) = inosine(out) + H(+)(in)</text>
        <dbReference type="Rhea" id="RHEA:29211"/>
        <dbReference type="ChEBI" id="CHEBI:15378"/>
        <dbReference type="ChEBI" id="CHEBI:17596"/>
    </reaction>
    <physiologicalReaction direction="left-to-right" evidence="1">
        <dbReference type="Rhea" id="RHEA:29212"/>
    </physiologicalReaction>
</comment>
<comment type="catalytic activity">
    <reaction evidence="1">
        <text>guanosine(in) + H(+)(out) = guanosine(out) + H(+)(in)</text>
        <dbReference type="Rhea" id="RHEA:29583"/>
        <dbReference type="ChEBI" id="CHEBI:15378"/>
        <dbReference type="ChEBI" id="CHEBI:16750"/>
    </reaction>
    <physiologicalReaction direction="left-to-right" evidence="1">
        <dbReference type="Rhea" id="RHEA:29584"/>
    </physiologicalReaction>
</comment>
<comment type="subcellular location">
    <subcellularLocation>
        <location evidence="1">Cell inner membrane</location>
        <topology evidence="1">Multi-pass membrane protein</topology>
    </subcellularLocation>
</comment>
<comment type="similarity">
    <text evidence="1">Belongs to the major facilitator superfamily. DHA1 family. NepI (TC 2.A.1.2.26) subfamily.</text>
</comment>
<comment type="sequence caution" evidence="2">
    <conflict type="erroneous initiation">
        <sequence resource="EMBL-CDS" id="AAN45239"/>
    </conflict>
</comment>
<comment type="sequence caution" evidence="2">
    <conflict type="erroneous initiation">
        <sequence resource="EMBL-CDS" id="AAP18957"/>
    </conflict>
</comment>
<sequence length="396" mass="41842">MSEFIAENRGADAITRPNWSAVFSVAFCVACLIIVEFLPVSLLTPMAQDLGISEGVAGQSVTVTAFVAMFASLFITQTIQATDRRYVVILFAVLLTLSCLLVSFANSFSLLLIGRACLGLALGGFWAMSASLTMRLVPPRTVPKALSVIFGAVSIALVIAAPLGSFLGELIGWRNVFNAAAVMGVLCIFWIIKSLPSLPGEPSHQKQNTFRLLQRPGVMAGMIAIFMSFAGQFAFFTYIRPVYMNLAGFGVDGLTLVLLSFGIASFIGTSLSSFILKRSVKLALAGAPLILAVSALVLTLWGSDKIVATGVAIIWGLTFALVPVGWSTWITRSLADQAEKAGSIQVAVIQLANTCGAAIGGYALDNIGLTSPLMLSGTLMLLTALLVTAKVKMKKS</sequence>
<accession>P0ADL2</accession>
<accession>P31438</accession>
<accession>P76725</accession>